<proteinExistence type="evidence at transcript level"/>
<protein>
    <recommendedName>
        <fullName>Pentatricopeptide repeat-containing protein At1g80880, mitochondrial</fullName>
    </recommendedName>
</protein>
<reference key="1">
    <citation type="journal article" date="2000" name="Nature">
        <title>Sequence and analysis of chromosome 1 of the plant Arabidopsis thaliana.</title>
        <authorList>
            <person name="Theologis A."/>
            <person name="Ecker J.R."/>
            <person name="Palm C.J."/>
            <person name="Federspiel N.A."/>
            <person name="Kaul S."/>
            <person name="White O."/>
            <person name="Alonso J."/>
            <person name="Altafi H."/>
            <person name="Araujo R."/>
            <person name="Bowman C.L."/>
            <person name="Brooks S.Y."/>
            <person name="Buehler E."/>
            <person name="Chan A."/>
            <person name="Chao Q."/>
            <person name="Chen H."/>
            <person name="Cheuk R.F."/>
            <person name="Chin C.W."/>
            <person name="Chung M.K."/>
            <person name="Conn L."/>
            <person name="Conway A.B."/>
            <person name="Conway A.R."/>
            <person name="Creasy T.H."/>
            <person name="Dewar K."/>
            <person name="Dunn P."/>
            <person name="Etgu P."/>
            <person name="Feldblyum T.V."/>
            <person name="Feng J.-D."/>
            <person name="Fong B."/>
            <person name="Fujii C.Y."/>
            <person name="Gill J.E."/>
            <person name="Goldsmith A.D."/>
            <person name="Haas B."/>
            <person name="Hansen N.F."/>
            <person name="Hughes B."/>
            <person name="Huizar L."/>
            <person name="Hunter J.L."/>
            <person name="Jenkins J."/>
            <person name="Johnson-Hopson C."/>
            <person name="Khan S."/>
            <person name="Khaykin E."/>
            <person name="Kim C.J."/>
            <person name="Koo H.L."/>
            <person name="Kremenetskaia I."/>
            <person name="Kurtz D.B."/>
            <person name="Kwan A."/>
            <person name="Lam B."/>
            <person name="Langin-Hooper S."/>
            <person name="Lee A."/>
            <person name="Lee J.M."/>
            <person name="Lenz C.A."/>
            <person name="Li J.H."/>
            <person name="Li Y.-P."/>
            <person name="Lin X."/>
            <person name="Liu S.X."/>
            <person name="Liu Z.A."/>
            <person name="Luros J.S."/>
            <person name="Maiti R."/>
            <person name="Marziali A."/>
            <person name="Militscher J."/>
            <person name="Miranda M."/>
            <person name="Nguyen M."/>
            <person name="Nierman W.C."/>
            <person name="Osborne B.I."/>
            <person name="Pai G."/>
            <person name="Peterson J."/>
            <person name="Pham P.K."/>
            <person name="Rizzo M."/>
            <person name="Rooney T."/>
            <person name="Rowley D."/>
            <person name="Sakano H."/>
            <person name="Salzberg S.L."/>
            <person name="Schwartz J.R."/>
            <person name="Shinn P."/>
            <person name="Southwick A.M."/>
            <person name="Sun H."/>
            <person name="Tallon L.J."/>
            <person name="Tambunga G."/>
            <person name="Toriumi M.J."/>
            <person name="Town C.D."/>
            <person name="Utterback T."/>
            <person name="Van Aken S."/>
            <person name="Vaysberg M."/>
            <person name="Vysotskaia V.S."/>
            <person name="Walker M."/>
            <person name="Wu D."/>
            <person name="Yu G."/>
            <person name="Fraser C.M."/>
            <person name="Venter J.C."/>
            <person name="Davis R.W."/>
        </authorList>
    </citation>
    <scope>NUCLEOTIDE SEQUENCE [LARGE SCALE GENOMIC DNA]</scope>
    <source>
        <strain>cv. Columbia</strain>
    </source>
</reference>
<reference key="2">
    <citation type="journal article" date="2017" name="Plant J.">
        <title>Araport11: a complete reannotation of the Arabidopsis thaliana reference genome.</title>
        <authorList>
            <person name="Cheng C.Y."/>
            <person name="Krishnakumar V."/>
            <person name="Chan A.P."/>
            <person name="Thibaud-Nissen F."/>
            <person name="Schobel S."/>
            <person name="Town C.D."/>
        </authorList>
    </citation>
    <scope>GENOME REANNOTATION</scope>
    <source>
        <strain>cv. Columbia</strain>
    </source>
</reference>
<reference key="3">
    <citation type="journal article" date="2006" name="Plant Biotechnol. J.">
        <title>Simultaneous high-throughput recombinational cloning of open reading frames in closed and open configurations.</title>
        <authorList>
            <person name="Underwood B.A."/>
            <person name="Vanderhaeghen R."/>
            <person name="Whitford R."/>
            <person name="Town C.D."/>
            <person name="Hilson P."/>
        </authorList>
    </citation>
    <scope>NUCLEOTIDE SEQUENCE [LARGE SCALE MRNA]</scope>
    <source>
        <strain>cv. Columbia</strain>
    </source>
</reference>
<reference key="4">
    <citation type="journal article" date="2004" name="Plant Cell">
        <title>Genome-wide analysis of Arabidopsis pentatricopeptide repeat proteins reveals their essential role in organelle biogenesis.</title>
        <authorList>
            <person name="Lurin C."/>
            <person name="Andres C."/>
            <person name="Aubourg S."/>
            <person name="Bellaoui M."/>
            <person name="Bitton F."/>
            <person name="Bruyere C."/>
            <person name="Caboche M."/>
            <person name="Debast C."/>
            <person name="Gualberto J."/>
            <person name="Hoffmann B."/>
            <person name="Lecharny A."/>
            <person name="Le Ret M."/>
            <person name="Martin-Magniette M.-L."/>
            <person name="Mireau H."/>
            <person name="Peeters N."/>
            <person name="Renou J.-P."/>
            <person name="Szurek B."/>
            <person name="Taconnat L."/>
            <person name="Small I."/>
        </authorList>
    </citation>
    <scope>GENE FAMILY</scope>
</reference>
<keyword id="KW-0496">Mitochondrion</keyword>
<keyword id="KW-1185">Reference proteome</keyword>
<keyword id="KW-0677">Repeat</keyword>
<keyword id="KW-0809">Transit peptide</keyword>
<organism>
    <name type="scientific">Arabidopsis thaliana</name>
    <name type="common">Mouse-ear cress</name>
    <dbReference type="NCBI Taxonomy" id="3702"/>
    <lineage>
        <taxon>Eukaryota</taxon>
        <taxon>Viridiplantae</taxon>
        <taxon>Streptophyta</taxon>
        <taxon>Embryophyta</taxon>
        <taxon>Tracheophyta</taxon>
        <taxon>Spermatophyta</taxon>
        <taxon>Magnoliopsida</taxon>
        <taxon>eudicotyledons</taxon>
        <taxon>Gunneridae</taxon>
        <taxon>Pentapetalae</taxon>
        <taxon>rosids</taxon>
        <taxon>malvids</taxon>
        <taxon>Brassicales</taxon>
        <taxon>Brassicaceae</taxon>
        <taxon>Camelineae</taxon>
        <taxon>Arabidopsis</taxon>
    </lineage>
</organism>
<evidence type="ECO:0000255" key="1"/>
<evidence type="ECO:0000256" key="2">
    <source>
        <dbReference type="SAM" id="MobiDB-lite"/>
    </source>
</evidence>
<evidence type="ECO:0000305" key="3"/>
<feature type="transit peptide" description="Mitochondrion" evidence="1">
    <location>
        <begin position="1"/>
        <end position="87"/>
    </location>
</feature>
<feature type="chain" id="PRO_0000342878" description="Pentatricopeptide repeat-containing protein At1g80880, mitochondrial">
    <location>
        <begin position="88"/>
        <end position="540"/>
    </location>
</feature>
<feature type="repeat" description="PPR 1">
    <location>
        <begin position="154"/>
        <end position="184"/>
    </location>
</feature>
<feature type="repeat" description="PPR 2">
    <location>
        <begin position="188"/>
        <end position="222"/>
    </location>
</feature>
<feature type="repeat" description="PPR 3">
    <location>
        <begin position="223"/>
        <end position="253"/>
    </location>
</feature>
<feature type="repeat" description="PPR 4">
    <location>
        <begin position="257"/>
        <end position="292"/>
    </location>
</feature>
<feature type="repeat" description="PPR 5">
    <location>
        <begin position="293"/>
        <end position="327"/>
    </location>
</feature>
<feature type="repeat" description="PPR 6">
    <location>
        <begin position="328"/>
        <end position="362"/>
    </location>
</feature>
<feature type="repeat" description="PPR 7">
    <location>
        <begin position="363"/>
        <end position="397"/>
    </location>
</feature>
<feature type="repeat" description="PPR 8">
    <location>
        <begin position="402"/>
        <end position="428"/>
    </location>
</feature>
<feature type="repeat" description="PPR 9">
    <location>
        <begin position="429"/>
        <end position="463"/>
    </location>
</feature>
<feature type="repeat" description="PPR 10">
    <location>
        <begin position="464"/>
        <end position="498"/>
    </location>
</feature>
<feature type="region of interest" description="Disordered" evidence="2">
    <location>
        <begin position="514"/>
        <end position="540"/>
    </location>
</feature>
<comment type="subcellular location">
    <subcellularLocation>
        <location evidence="3">Mitochondrion</location>
    </subcellularLocation>
</comment>
<comment type="similarity">
    <text evidence="3">Belongs to the PPR family. P subfamily.</text>
</comment>
<comment type="online information" name="Pentatricopeptide repeat proteins">
    <link uri="https://ppr.plantenergy.uwa.edu.au"/>
</comment>
<gene>
    <name type="ordered locus">At1g80880</name>
    <name type="ORF">F23A5.24</name>
</gene>
<dbReference type="EMBL" id="AC011713">
    <property type="protein sequence ID" value="AAF14676.1"/>
    <property type="molecule type" value="Genomic_DNA"/>
</dbReference>
<dbReference type="EMBL" id="CP002684">
    <property type="protein sequence ID" value="AEE36463.1"/>
    <property type="molecule type" value="Genomic_DNA"/>
</dbReference>
<dbReference type="EMBL" id="CP002684">
    <property type="protein sequence ID" value="ANM60753.1"/>
    <property type="molecule type" value="Genomic_DNA"/>
</dbReference>
<dbReference type="EMBL" id="CP002684">
    <property type="protein sequence ID" value="ANM60754.1"/>
    <property type="molecule type" value="Genomic_DNA"/>
</dbReference>
<dbReference type="EMBL" id="DQ446448">
    <property type="protein sequence ID" value="ABE65789.1"/>
    <property type="molecule type" value="mRNA"/>
</dbReference>
<dbReference type="PIR" id="F96841">
    <property type="entry name" value="F96841"/>
</dbReference>
<dbReference type="RefSeq" id="NP_001319433.1">
    <property type="nucleotide sequence ID" value="NM_001335018.1"/>
</dbReference>
<dbReference type="RefSeq" id="NP_001323017.1">
    <property type="nucleotide sequence ID" value="NM_001335019.1"/>
</dbReference>
<dbReference type="RefSeq" id="NP_178203.1">
    <property type="nucleotide sequence ID" value="NM_106736.2"/>
</dbReference>
<dbReference type="SMR" id="Q9SAH2"/>
<dbReference type="FunCoup" id="Q9SAH2">
    <property type="interactions" value="514"/>
</dbReference>
<dbReference type="PaxDb" id="3702-AT1G80880.1"/>
<dbReference type="ProteomicsDB" id="249412"/>
<dbReference type="EnsemblPlants" id="AT1G80880.1">
    <property type="protein sequence ID" value="AT1G80880.1"/>
    <property type="gene ID" value="AT1G80880"/>
</dbReference>
<dbReference type="EnsemblPlants" id="AT1G80880.2">
    <property type="protein sequence ID" value="AT1G80880.2"/>
    <property type="gene ID" value="AT1G80880"/>
</dbReference>
<dbReference type="EnsemblPlants" id="AT1G80880.3">
    <property type="protein sequence ID" value="AT1G80880.3"/>
    <property type="gene ID" value="AT1G80880"/>
</dbReference>
<dbReference type="GeneID" id="844428"/>
<dbReference type="Gramene" id="AT1G80880.1">
    <property type="protein sequence ID" value="AT1G80880.1"/>
    <property type="gene ID" value="AT1G80880"/>
</dbReference>
<dbReference type="Gramene" id="AT1G80880.2">
    <property type="protein sequence ID" value="AT1G80880.2"/>
    <property type="gene ID" value="AT1G80880"/>
</dbReference>
<dbReference type="Gramene" id="AT1G80880.3">
    <property type="protein sequence ID" value="AT1G80880.3"/>
    <property type="gene ID" value="AT1G80880"/>
</dbReference>
<dbReference type="KEGG" id="ath:AT1G80880"/>
<dbReference type="Araport" id="AT1G80880"/>
<dbReference type="TAIR" id="AT1G80880"/>
<dbReference type="eggNOG" id="KOG4197">
    <property type="taxonomic scope" value="Eukaryota"/>
</dbReference>
<dbReference type="HOGENOM" id="CLU_002706_49_20_1"/>
<dbReference type="InParanoid" id="Q9SAH2"/>
<dbReference type="OMA" id="SMIRPLC"/>
<dbReference type="PhylomeDB" id="Q9SAH2"/>
<dbReference type="PRO" id="PR:Q9SAH2"/>
<dbReference type="Proteomes" id="UP000006548">
    <property type="component" value="Chromosome 1"/>
</dbReference>
<dbReference type="ExpressionAtlas" id="Q9SAH2">
    <property type="expression patterns" value="baseline and differential"/>
</dbReference>
<dbReference type="GO" id="GO:0005739">
    <property type="term" value="C:mitochondrion"/>
    <property type="evidence" value="ECO:0007669"/>
    <property type="project" value="UniProtKB-SubCell"/>
</dbReference>
<dbReference type="Gene3D" id="1.25.40.10">
    <property type="entry name" value="Tetratricopeptide repeat domain"/>
    <property type="match status" value="3"/>
</dbReference>
<dbReference type="InterPro" id="IPR002885">
    <property type="entry name" value="Pentatricopeptide_rpt"/>
</dbReference>
<dbReference type="InterPro" id="IPR050667">
    <property type="entry name" value="PPR-containing_protein"/>
</dbReference>
<dbReference type="InterPro" id="IPR033443">
    <property type="entry name" value="PROP1-like_PPR_dom"/>
</dbReference>
<dbReference type="InterPro" id="IPR011990">
    <property type="entry name" value="TPR-like_helical_dom_sf"/>
</dbReference>
<dbReference type="NCBIfam" id="TIGR00756">
    <property type="entry name" value="PPR"/>
    <property type="match status" value="4"/>
</dbReference>
<dbReference type="PANTHER" id="PTHR47939">
    <property type="entry name" value="MEMBRANE-ASSOCIATED SALT-INDUCIBLE PROTEIN-LIKE"/>
    <property type="match status" value="1"/>
</dbReference>
<dbReference type="PANTHER" id="PTHR47939:SF5">
    <property type="entry name" value="PENTACOTRIPEPTIDE-REPEAT REGION OF PRORP DOMAIN-CONTAINING PROTEIN"/>
    <property type="match status" value="1"/>
</dbReference>
<dbReference type="Pfam" id="PF01535">
    <property type="entry name" value="PPR"/>
    <property type="match status" value="2"/>
</dbReference>
<dbReference type="Pfam" id="PF17177">
    <property type="entry name" value="PPR_long"/>
    <property type="match status" value="1"/>
</dbReference>
<dbReference type="PROSITE" id="PS51375">
    <property type="entry name" value="PPR"/>
    <property type="match status" value="9"/>
</dbReference>
<sequence>MAAIVAIGRKLARTPQWRIVQHQSLLRRAVSTSFSSSVSQNHSFSSAFHRAGHVHSQVLSYLPHFASSNRFSTKTISETFDINLTALAPLEKGLIDLIRQVSELESEADAMASLEDSSFDLNHDSFYSLIWELRDEWRLAFLAFKWGEKRGCDDQKSCDLMIWVLGNHQKFNIAWCLIRDMFNVSKDTRKAMFLMMDRYAAANDTSQAIRTFDIMDKFKHTPYDEAFQGLLCALCRHGHIEKAEEFMLASKKLFPVDVEGFNVILNGWCNIWTDVTEAKRIWREMGNYCITPNKDSYSHMISCFSKVGNLFDSLRLYDEMKKRGLAPGIEVYNSLVYVLTREDCFDEAMKLMKKLNEEGLKPDSVTYNSMIRPLCEAGKLDVARNVLATMISENLSPTVDTFHAFLEAVNFEKTLEVLGQMKISDLGPTEETFLLILGKLFKGKQPENALKIWAEMDRFEIVANPALYLATIQGLLSCGWLEKAREIYSEMKSKGFVGNPMLQKLLEEQKVKGVRKSKRMNLQKVGSQEGYKGQRSVDRK</sequence>
<name>PP137_ARATH</name>
<accession>Q9SAH2</accession>